<comment type="function">
    <text evidence="1">Inhibits all the catalytic activities of DNA gyrase by preventing its interaction with DNA. Acts by binding directly to the C-terminal domain of GyrB, which probably disrupts DNA binding by the gyrase.</text>
</comment>
<comment type="cofactor">
    <cofactor evidence="1">
        <name>Zn(2+)</name>
        <dbReference type="ChEBI" id="CHEBI:29105"/>
    </cofactor>
    <text evidence="1">Binds 1 zinc ion.</text>
</comment>
<comment type="subunit">
    <text evidence="1">Interacts with GyrB.</text>
</comment>
<comment type="similarity">
    <text evidence="1">Belongs to the DNA gyrase inhibitor YacG family.</text>
</comment>
<organism>
    <name type="scientific">Actinobacillus pleuropneumoniae serotype 7 (strain AP76)</name>
    <dbReference type="NCBI Taxonomy" id="537457"/>
    <lineage>
        <taxon>Bacteria</taxon>
        <taxon>Pseudomonadati</taxon>
        <taxon>Pseudomonadota</taxon>
        <taxon>Gammaproteobacteria</taxon>
        <taxon>Pasteurellales</taxon>
        <taxon>Pasteurellaceae</taxon>
        <taxon>Actinobacillus</taxon>
    </lineage>
</organism>
<gene>
    <name evidence="1" type="primary">yacG</name>
    <name type="ordered locus">APP7_0934</name>
</gene>
<name>YACG_ACTP7</name>
<keyword id="KW-0479">Metal-binding</keyword>
<keyword id="KW-0862">Zinc</keyword>
<reference key="1">
    <citation type="submission" date="2008-06" db="EMBL/GenBank/DDBJ databases">
        <title>Genome and proteome analysis of A. pleuropneumoniae serotype 7.</title>
        <authorList>
            <person name="Linke B."/>
            <person name="Buettner F."/>
            <person name="Martinez-Arias R."/>
            <person name="Goesmann A."/>
            <person name="Baltes N."/>
            <person name="Tegetmeyer H."/>
            <person name="Singh M."/>
            <person name="Gerlach G.F."/>
        </authorList>
    </citation>
    <scope>NUCLEOTIDE SEQUENCE [LARGE SCALE GENOMIC DNA]</scope>
    <source>
        <strain>AP76</strain>
    </source>
</reference>
<evidence type="ECO:0000255" key="1">
    <source>
        <dbReference type="HAMAP-Rule" id="MF_00649"/>
    </source>
</evidence>
<dbReference type="EMBL" id="CP001091">
    <property type="protein sequence ID" value="ACE61586.1"/>
    <property type="molecule type" value="Genomic_DNA"/>
</dbReference>
<dbReference type="RefSeq" id="WP_005597388.1">
    <property type="nucleotide sequence ID" value="NC_010939.1"/>
</dbReference>
<dbReference type="SMR" id="B3H1L4"/>
<dbReference type="GeneID" id="48599062"/>
<dbReference type="KEGG" id="apa:APP7_0934"/>
<dbReference type="HOGENOM" id="CLU_178280_3_2_6"/>
<dbReference type="Proteomes" id="UP000001226">
    <property type="component" value="Chromosome"/>
</dbReference>
<dbReference type="GO" id="GO:0008657">
    <property type="term" value="F:DNA topoisomerase type II (double strand cut, ATP-hydrolyzing) inhibitor activity"/>
    <property type="evidence" value="ECO:0007669"/>
    <property type="project" value="UniProtKB-UniRule"/>
</dbReference>
<dbReference type="GO" id="GO:0008270">
    <property type="term" value="F:zinc ion binding"/>
    <property type="evidence" value="ECO:0007669"/>
    <property type="project" value="UniProtKB-UniRule"/>
</dbReference>
<dbReference type="GO" id="GO:0006355">
    <property type="term" value="P:regulation of DNA-templated transcription"/>
    <property type="evidence" value="ECO:0007669"/>
    <property type="project" value="InterPro"/>
</dbReference>
<dbReference type="Gene3D" id="3.30.50.10">
    <property type="entry name" value="Erythroid Transcription Factor GATA-1, subunit A"/>
    <property type="match status" value="1"/>
</dbReference>
<dbReference type="HAMAP" id="MF_00649">
    <property type="entry name" value="DNA_gyrase_inhibitor_YacG"/>
    <property type="match status" value="1"/>
</dbReference>
<dbReference type="InterPro" id="IPR005584">
    <property type="entry name" value="DNA_gyrase_inhibitor_YacG"/>
</dbReference>
<dbReference type="InterPro" id="IPR013088">
    <property type="entry name" value="Znf_NHR/GATA"/>
</dbReference>
<dbReference type="NCBIfam" id="NF001638">
    <property type="entry name" value="PRK00418.1"/>
    <property type="match status" value="1"/>
</dbReference>
<dbReference type="PANTHER" id="PTHR36150">
    <property type="entry name" value="DNA GYRASE INHIBITOR YACG"/>
    <property type="match status" value="1"/>
</dbReference>
<dbReference type="PANTHER" id="PTHR36150:SF1">
    <property type="entry name" value="DNA GYRASE INHIBITOR YACG"/>
    <property type="match status" value="1"/>
</dbReference>
<dbReference type="Pfam" id="PF03884">
    <property type="entry name" value="YacG"/>
    <property type="match status" value="1"/>
</dbReference>
<dbReference type="SUPFAM" id="SSF57716">
    <property type="entry name" value="Glucocorticoid receptor-like (DNA-binding domain)"/>
    <property type="match status" value="1"/>
</dbReference>
<feature type="chain" id="PRO_1000130955" description="DNA gyrase inhibitor YacG">
    <location>
        <begin position="1"/>
        <end position="62"/>
    </location>
</feature>
<feature type="binding site" evidence="1">
    <location>
        <position position="8"/>
    </location>
    <ligand>
        <name>Zn(2+)</name>
        <dbReference type="ChEBI" id="CHEBI:29105"/>
    </ligand>
</feature>
<feature type="binding site" evidence="1">
    <location>
        <position position="11"/>
    </location>
    <ligand>
        <name>Zn(2+)</name>
        <dbReference type="ChEBI" id="CHEBI:29105"/>
    </ligand>
</feature>
<feature type="binding site" evidence="1">
    <location>
        <position position="27"/>
    </location>
    <ligand>
        <name>Zn(2+)</name>
        <dbReference type="ChEBI" id="CHEBI:29105"/>
    </ligand>
</feature>
<feature type="binding site" evidence="1">
    <location>
        <position position="31"/>
    </location>
    <ligand>
        <name>Zn(2+)</name>
        <dbReference type="ChEBI" id="CHEBI:29105"/>
    </ligand>
</feature>
<sequence length="62" mass="7194">MSETIVNCPTCNQDVIWKPESKYRPFCSERCQLIDLGEWANEEKRIAAVENDVMTSDLEGHY</sequence>
<proteinExistence type="inferred from homology"/>
<accession>B3H1L4</accession>
<protein>
    <recommendedName>
        <fullName evidence="1">DNA gyrase inhibitor YacG</fullName>
    </recommendedName>
</protein>